<accession>Q9KWS8</accession>
<sequence>MEKERDVAQEQATYEQESPNAERQEELKENEHQEKNAPEEQEKVREENGRQDAQKDEIGDPEKAKEEQNEELAAANAKIAELEAKIKEMENRYLRLYADFENFRRRTRREMEAAEKYRAQSLVSDLLPVLDNFERALKIKAEDEQAKSILQGMEMVYRSVLDALKKEGVEAIEAVGKPFDPHLHQAVMQVEDSNYEPNTVVEELQKGYKLKDRVIRPAMVKVSQ</sequence>
<organism>
    <name type="scientific">Parageobacillus thermoglucosidasius</name>
    <name type="common">Geobacillus thermoglucosidasius</name>
    <dbReference type="NCBI Taxonomy" id="1426"/>
    <lineage>
        <taxon>Bacteria</taxon>
        <taxon>Bacillati</taxon>
        <taxon>Bacillota</taxon>
        <taxon>Bacilli</taxon>
        <taxon>Bacillales</taxon>
        <taxon>Anoxybacillaceae</taxon>
        <taxon>Parageobacillus</taxon>
    </lineage>
</organism>
<protein>
    <recommendedName>
        <fullName evidence="1">Protein GrpE</fullName>
    </recommendedName>
    <alternativeName>
        <fullName evidence="1">HSP-70 cofactor</fullName>
    </alternativeName>
</protein>
<dbReference type="EMBL" id="AB017035">
    <property type="protein sequence ID" value="BAB03214.1"/>
    <property type="molecule type" value="Genomic_DNA"/>
</dbReference>
<dbReference type="RefSeq" id="WP_042383496.1">
    <property type="nucleotide sequence ID" value="NZ_QQOJ01000001.1"/>
</dbReference>
<dbReference type="SMR" id="Q9KWS8"/>
<dbReference type="STRING" id="1426.AOT13_16995"/>
<dbReference type="GeneID" id="56927135"/>
<dbReference type="PATRIC" id="fig|1426.34.peg.3919"/>
<dbReference type="eggNOG" id="COG0576">
    <property type="taxonomic scope" value="Bacteria"/>
</dbReference>
<dbReference type="OrthoDB" id="9812586at2"/>
<dbReference type="GO" id="GO:0005737">
    <property type="term" value="C:cytoplasm"/>
    <property type="evidence" value="ECO:0007669"/>
    <property type="project" value="UniProtKB-SubCell"/>
</dbReference>
<dbReference type="GO" id="GO:0000774">
    <property type="term" value="F:adenyl-nucleotide exchange factor activity"/>
    <property type="evidence" value="ECO:0007669"/>
    <property type="project" value="InterPro"/>
</dbReference>
<dbReference type="GO" id="GO:0042803">
    <property type="term" value="F:protein homodimerization activity"/>
    <property type="evidence" value="ECO:0007669"/>
    <property type="project" value="InterPro"/>
</dbReference>
<dbReference type="GO" id="GO:0051087">
    <property type="term" value="F:protein-folding chaperone binding"/>
    <property type="evidence" value="ECO:0007669"/>
    <property type="project" value="InterPro"/>
</dbReference>
<dbReference type="GO" id="GO:0051082">
    <property type="term" value="F:unfolded protein binding"/>
    <property type="evidence" value="ECO:0007669"/>
    <property type="project" value="TreeGrafter"/>
</dbReference>
<dbReference type="GO" id="GO:0006457">
    <property type="term" value="P:protein folding"/>
    <property type="evidence" value="ECO:0007669"/>
    <property type="project" value="InterPro"/>
</dbReference>
<dbReference type="CDD" id="cd00446">
    <property type="entry name" value="GrpE"/>
    <property type="match status" value="1"/>
</dbReference>
<dbReference type="FunFam" id="2.30.22.10:FF:000001">
    <property type="entry name" value="Protein GrpE"/>
    <property type="match status" value="1"/>
</dbReference>
<dbReference type="FunFam" id="3.90.20.20:FF:000002">
    <property type="entry name" value="Protein GrpE"/>
    <property type="match status" value="1"/>
</dbReference>
<dbReference type="Gene3D" id="3.90.20.20">
    <property type="match status" value="1"/>
</dbReference>
<dbReference type="Gene3D" id="2.30.22.10">
    <property type="entry name" value="Head domain of nucleotide exchange factor GrpE"/>
    <property type="match status" value="1"/>
</dbReference>
<dbReference type="HAMAP" id="MF_01151">
    <property type="entry name" value="GrpE"/>
    <property type="match status" value="1"/>
</dbReference>
<dbReference type="InterPro" id="IPR000740">
    <property type="entry name" value="GrpE"/>
</dbReference>
<dbReference type="InterPro" id="IPR013805">
    <property type="entry name" value="GrpE_coiled_coil"/>
</dbReference>
<dbReference type="InterPro" id="IPR009012">
    <property type="entry name" value="GrpE_head"/>
</dbReference>
<dbReference type="NCBIfam" id="NF010738">
    <property type="entry name" value="PRK14140.1"/>
    <property type="match status" value="1"/>
</dbReference>
<dbReference type="NCBIfam" id="NF010748">
    <property type="entry name" value="PRK14150.1"/>
    <property type="match status" value="1"/>
</dbReference>
<dbReference type="PANTHER" id="PTHR21237">
    <property type="entry name" value="GRPE PROTEIN"/>
    <property type="match status" value="1"/>
</dbReference>
<dbReference type="PANTHER" id="PTHR21237:SF23">
    <property type="entry name" value="GRPE PROTEIN HOMOLOG, MITOCHONDRIAL"/>
    <property type="match status" value="1"/>
</dbReference>
<dbReference type="Pfam" id="PF01025">
    <property type="entry name" value="GrpE"/>
    <property type="match status" value="1"/>
</dbReference>
<dbReference type="PRINTS" id="PR00773">
    <property type="entry name" value="GRPEPROTEIN"/>
</dbReference>
<dbReference type="SUPFAM" id="SSF58014">
    <property type="entry name" value="Coiled-coil domain of nucleotide exchange factor GrpE"/>
    <property type="match status" value="1"/>
</dbReference>
<dbReference type="SUPFAM" id="SSF51064">
    <property type="entry name" value="Head domain of nucleotide exchange factor GrpE"/>
    <property type="match status" value="1"/>
</dbReference>
<dbReference type="PROSITE" id="PS01071">
    <property type="entry name" value="GRPE"/>
    <property type="match status" value="1"/>
</dbReference>
<feature type="chain" id="PRO_0000113744" description="Protein GrpE">
    <location>
        <begin position="1"/>
        <end position="224"/>
    </location>
</feature>
<feature type="region of interest" description="Disordered" evidence="2">
    <location>
        <begin position="1"/>
        <end position="72"/>
    </location>
</feature>
<feature type="compositionally biased region" description="Polar residues" evidence="2">
    <location>
        <begin position="10"/>
        <end position="19"/>
    </location>
</feature>
<feature type="compositionally biased region" description="Basic and acidic residues" evidence="2">
    <location>
        <begin position="20"/>
        <end position="67"/>
    </location>
</feature>
<reference key="1">
    <citation type="journal article" date="2000" name="Antonie Van Leeuwenhoek">
        <title>Features of dnaK operon genes of the obligate thermophile Bacillus thermoglucosidasius KP1006.</title>
        <authorList>
            <person name="Watanabe K."/>
            <person name="Iwashiro T."/>
            <person name="Suzuki Y."/>
        </authorList>
    </citation>
    <scope>NUCLEOTIDE SEQUENCE [GENOMIC DNA]</scope>
</reference>
<evidence type="ECO:0000255" key="1">
    <source>
        <dbReference type="HAMAP-Rule" id="MF_01151"/>
    </source>
</evidence>
<evidence type="ECO:0000256" key="2">
    <source>
        <dbReference type="SAM" id="MobiDB-lite"/>
    </source>
</evidence>
<keyword id="KW-0143">Chaperone</keyword>
<keyword id="KW-0963">Cytoplasm</keyword>
<keyword id="KW-0346">Stress response</keyword>
<proteinExistence type="inferred from homology"/>
<name>GRPE_PARTM</name>
<gene>
    <name evidence="1" type="primary">grpE</name>
</gene>
<comment type="function">
    <text evidence="1">Participates actively in the response to hyperosmotic and heat shock by preventing the aggregation of stress-denatured proteins, in association with DnaK and GrpE. It is the nucleotide exchange factor for DnaK and may function as a thermosensor. Unfolded proteins bind initially to DnaJ; upon interaction with the DnaJ-bound protein, DnaK hydrolyzes its bound ATP, resulting in the formation of a stable complex. GrpE releases ADP from DnaK; ATP binding to DnaK triggers the release of the substrate protein, thus completing the reaction cycle. Several rounds of ATP-dependent interactions between DnaJ, DnaK and GrpE are required for fully efficient folding.</text>
</comment>
<comment type="subunit">
    <text evidence="1">Homodimer.</text>
</comment>
<comment type="subcellular location">
    <subcellularLocation>
        <location evidence="1">Cytoplasm</location>
    </subcellularLocation>
</comment>
<comment type="similarity">
    <text evidence="1">Belongs to the GrpE family.</text>
</comment>